<comment type="catalytic activity">
    <reaction evidence="1">
        <text>tRNA(Phe) + L-phenylalanine + ATP = L-phenylalanyl-tRNA(Phe) + AMP + diphosphate + H(+)</text>
        <dbReference type="Rhea" id="RHEA:19413"/>
        <dbReference type="Rhea" id="RHEA-COMP:9668"/>
        <dbReference type="Rhea" id="RHEA-COMP:9699"/>
        <dbReference type="ChEBI" id="CHEBI:15378"/>
        <dbReference type="ChEBI" id="CHEBI:30616"/>
        <dbReference type="ChEBI" id="CHEBI:33019"/>
        <dbReference type="ChEBI" id="CHEBI:58095"/>
        <dbReference type="ChEBI" id="CHEBI:78442"/>
        <dbReference type="ChEBI" id="CHEBI:78531"/>
        <dbReference type="ChEBI" id="CHEBI:456215"/>
        <dbReference type="EC" id="6.1.1.20"/>
    </reaction>
</comment>
<comment type="cofactor">
    <cofactor evidence="1">
        <name>Mg(2+)</name>
        <dbReference type="ChEBI" id="CHEBI:18420"/>
    </cofactor>
    <text evidence="1">Binds 2 magnesium ions per tetramer.</text>
</comment>
<comment type="subunit">
    <text evidence="1">Tetramer of two alpha and two beta subunits.</text>
</comment>
<comment type="subcellular location">
    <subcellularLocation>
        <location evidence="1">Cytoplasm</location>
    </subcellularLocation>
</comment>
<comment type="similarity">
    <text evidence="1">Belongs to the class-II aminoacyl-tRNA synthetase family. Phe-tRNA synthetase alpha subunit type 2 subfamily.</text>
</comment>
<name>SYFA_METJA</name>
<protein>
    <recommendedName>
        <fullName evidence="1">Phenylalanine--tRNA ligase alpha subunit</fullName>
        <ecNumber evidence="1">6.1.1.20</ecNumber>
    </recommendedName>
    <alternativeName>
        <fullName evidence="1">Phenylalanyl-tRNA synthetase alpha subunit</fullName>
        <shortName evidence="1">PheRS</shortName>
    </alternativeName>
</protein>
<gene>
    <name evidence="1" type="primary">pheS</name>
    <name type="ordered locus">MJ0487</name>
</gene>
<dbReference type="EC" id="6.1.1.20" evidence="1"/>
<dbReference type="EMBL" id="L77117">
    <property type="protein sequence ID" value="AAB98478.1"/>
    <property type="molecule type" value="Genomic_DNA"/>
</dbReference>
<dbReference type="PIR" id="G64360">
    <property type="entry name" value="G64360"/>
</dbReference>
<dbReference type="RefSeq" id="WP_010869988.1">
    <property type="nucleotide sequence ID" value="NC_000909.1"/>
</dbReference>
<dbReference type="SMR" id="Q57911"/>
<dbReference type="FunCoup" id="Q57911">
    <property type="interactions" value="273"/>
</dbReference>
<dbReference type="STRING" id="243232.MJ_0487"/>
<dbReference type="PaxDb" id="243232-MJ_0487"/>
<dbReference type="EnsemblBacteria" id="AAB98478">
    <property type="protein sequence ID" value="AAB98478"/>
    <property type="gene ID" value="MJ_0487"/>
</dbReference>
<dbReference type="GeneID" id="1451349"/>
<dbReference type="KEGG" id="mja:MJ_0487"/>
<dbReference type="eggNOG" id="arCOG00410">
    <property type="taxonomic scope" value="Archaea"/>
</dbReference>
<dbReference type="HOGENOM" id="CLU_025086_2_2_2"/>
<dbReference type="InParanoid" id="Q57911"/>
<dbReference type="OrthoDB" id="372178at2157"/>
<dbReference type="PhylomeDB" id="Q57911"/>
<dbReference type="Proteomes" id="UP000000805">
    <property type="component" value="Chromosome"/>
</dbReference>
<dbReference type="GO" id="GO:0005737">
    <property type="term" value="C:cytoplasm"/>
    <property type="evidence" value="ECO:0000318"/>
    <property type="project" value="GO_Central"/>
</dbReference>
<dbReference type="GO" id="GO:0005524">
    <property type="term" value="F:ATP binding"/>
    <property type="evidence" value="ECO:0007669"/>
    <property type="project" value="UniProtKB-UniRule"/>
</dbReference>
<dbReference type="GO" id="GO:0000287">
    <property type="term" value="F:magnesium ion binding"/>
    <property type="evidence" value="ECO:0007669"/>
    <property type="project" value="UniProtKB-UniRule"/>
</dbReference>
<dbReference type="GO" id="GO:0004826">
    <property type="term" value="F:phenylalanine-tRNA ligase activity"/>
    <property type="evidence" value="ECO:0000318"/>
    <property type="project" value="GO_Central"/>
</dbReference>
<dbReference type="GO" id="GO:0000049">
    <property type="term" value="F:tRNA binding"/>
    <property type="evidence" value="ECO:0007669"/>
    <property type="project" value="InterPro"/>
</dbReference>
<dbReference type="GO" id="GO:0006432">
    <property type="term" value="P:phenylalanyl-tRNA aminoacylation"/>
    <property type="evidence" value="ECO:0000318"/>
    <property type="project" value="GO_Central"/>
</dbReference>
<dbReference type="CDD" id="cd00496">
    <property type="entry name" value="PheRS_alpha_core"/>
    <property type="match status" value="1"/>
</dbReference>
<dbReference type="FunFam" id="3.30.930.10:FF:000095">
    <property type="entry name" value="Phenylalanine--tRNA ligase alpha subunit"/>
    <property type="match status" value="1"/>
</dbReference>
<dbReference type="Gene3D" id="3.30.930.10">
    <property type="entry name" value="Bira Bifunctional Protein, Domain 2"/>
    <property type="match status" value="1"/>
</dbReference>
<dbReference type="HAMAP" id="MF_00282">
    <property type="entry name" value="Phe_tRNA_synth_alpha2"/>
    <property type="match status" value="1"/>
</dbReference>
<dbReference type="InterPro" id="IPR006195">
    <property type="entry name" value="aa-tRNA-synth_II"/>
</dbReference>
<dbReference type="InterPro" id="IPR045864">
    <property type="entry name" value="aa-tRNA-synth_II/BPL/LPL"/>
</dbReference>
<dbReference type="InterPro" id="IPR004529">
    <property type="entry name" value="Phe-tRNA-synth_IIc_asu"/>
</dbReference>
<dbReference type="InterPro" id="IPR022917">
    <property type="entry name" value="Phe_tRNA_ligase_alpha_bac/arc"/>
</dbReference>
<dbReference type="InterPro" id="IPR002319">
    <property type="entry name" value="Phenylalanyl-tRNA_Synthase"/>
</dbReference>
<dbReference type="NCBIfam" id="TIGR00468">
    <property type="entry name" value="pheS"/>
    <property type="match status" value="1"/>
</dbReference>
<dbReference type="NCBIfam" id="NF003210">
    <property type="entry name" value="PRK04172.1"/>
    <property type="match status" value="1"/>
</dbReference>
<dbReference type="PANTHER" id="PTHR11538:SF40">
    <property type="entry name" value="PHENYLALANINE--TRNA LIGASE ALPHA SUBUNIT"/>
    <property type="match status" value="1"/>
</dbReference>
<dbReference type="PANTHER" id="PTHR11538">
    <property type="entry name" value="PHENYLALANYL-TRNA SYNTHETASE"/>
    <property type="match status" value="1"/>
</dbReference>
<dbReference type="Pfam" id="PF01409">
    <property type="entry name" value="tRNA-synt_2d"/>
    <property type="match status" value="1"/>
</dbReference>
<dbReference type="SUPFAM" id="SSF55681">
    <property type="entry name" value="Class II aaRS and biotin synthetases"/>
    <property type="match status" value="1"/>
</dbReference>
<dbReference type="PROSITE" id="PS50862">
    <property type="entry name" value="AA_TRNA_LIGASE_II"/>
    <property type="match status" value="1"/>
</dbReference>
<feature type="chain" id="PRO_0000126810" description="Phenylalanine--tRNA ligase alpha subunit">
    <location>
        <begin position="1"/>
        <end position="480"/>
    </location>
</feature>
<feature type="binding site" evidence="1">
    <location>
        <position position="324"/>
    </location>
    <ligand>
        <name>L-phenylalanine</name>
        <dbReference type="ChEBI" id="CHEBI:58095"/>
    </ligand>
</feature>
<feature type="binding site" evidence="1">
    <location>
        <position position="407"/>
    </location>
    <ligand>
        <name>L-phenylalanine</name>
        <dbReference type="ChEBI" id="CHEBI:58095"/>
    </ligand>
</feature>
<feature type="binding site" evidence="1">
    <location>
        <position position="409"/>
    </location>
    <ligand>
        <name>Mg(2+)</name>
        <dbReference type="ChEBI" id="CHEBI:18420"/>
        <note>shared with beta subunit</note>
    </ligand>
</feature>
<feature type="binding site" evidence="1">
    <location>
        <position position="432"/>
    </location>
    <ligand>
        <name>L-phenylalanine</name>
        <dbReference type="ChEBI" id="CHEBI:58095"/>
    </ligand>
</feature>
<reference key="1">
    <citation type="journal article" date="1996" name="Science">
        <title>Complete genome sequence of the methanogenic archaeon, Methanococcus jannaschii.</title>
        <authorList>
            <person name="Bult C.J."/>
            <person name="White O."/>
            <person name="Olsen G.J."/>
            <person name="Zhou L."/>
            <person name="Fleischmann R.D."/>
            <person name="Sutton G.G."/>
            <person name="Blake J.A."/>
            <person name="FitzGerald L.M."/>
            <person name="Clayton R.A."/>
            <person name="Gocayne J.D."/>
            <person name="Kerlavage A.R."/>
            <person name="Dougherty B.A."/>
            <person name="Tomb J.-F."/>
            <person name="Adams M.D."/>
            <person name="Reich C.I."/>
            <person name="Overbeek R."/>
            <person name="Kirkness E.F."/>
            <person name="Weinstock K.G."/>
            <person name="Merrick J.M."/>
            <person name="Glodek A."/>
            <person name="Scott J.L."/>
            <person name="Geoghagen N.S.M."/>
            <person name="Weidman J.F."/>
            <person name="Fuhrmann J.L."/>
            <person name="Nguyen D."/>
            <person name="Utterback T.R."/>
            <person name="Kelley J.M."/>
            <person name="Peterson J.D."/>
            <person name="Sadow P.W."/>
            <person name="Hanna M.C."/>
            <person name="Cotton M.D."/>
            <person name="Roberts K.M."/>
            <person name="Hurst M.A."/>
            <person name="Kaine B.P."/>
            <person name="Borodovsky M."/>
            <person name="Klenk H.-P."/>
            <person name="Fraser C.M."/>
            <person name="Smith H.O."/>
            <person name="Woese C.R."/>
            <person name="Venter J.C."/>
        </authorList>
    </citation>
    <scope>NUCLEOTIDE SEQUENCE [LARGE SCALE GENOMIC DNA]</scope>
    <source>
        <strain>ATCC 43067 / DSM 2661 / JAL-1 / JCM 10045 / NBRC 100440</strain>
    </source>
</reference>
<accession>Q57911</accession>
<evidence type="ECO:0000255" key="1">
    <source>
        <dbReference type="HAMAP-Rule" id="MF_00282"/>
    </source>
</evidence>
<organism>
    <name type="scientific">Methanocaldococcus jannaschii (strain ATCC 43067 / DSM 2661 / JAL-1 / JCM 10045 / NBRC 100440)</name>
    <name type="common">Methanococcus jannaschii</name>
    <dbReference type="NCBI Taxonomy" id="243232"/>
    <lineage>
        <taxon>Archaea</taxon>
        <taxon>Methanobacteriati</taxon>
        <taxon>Methanobacteriota</taxon>
        <taxon>Methanomada group</taxon>
        <taxon>Methanococci</taxon>
        <taxon>Methanococcales</taxon>
        <taxon>Methanocaldococcaceae</taxon>
        <taxon>Methanocaldococcus</taxon>
    </lineage>
</organism>
<sequence length="480" mass="57027">MELHIDEKRLLKIFQDNNRDEFNLNELEKFMPKEKILRVSLWLKGKNLVETEEKVKKIIKLIKEEEFPERKIANYLKQHNIKEIEIKNLKDILPKEEINAALGAIKRKGIARIEKGKIIFDNLDYKDVEEQLLQKIKENKYLDDFSEEEKKIIDILKKRGYVDFDEEKEIKIKLTEKGKEFIKNPIEIEEEITQLTRDIIISGKWKKAYIRPYDVKVPTKPIYPAKVHPLTRIIREVKEILLAMGFKEVKSPIVETEFWNFDMLFEPQDHPAREMQDTFFLKYPNEGDIPEDLLSKVKEVHERCWKYKFDENVSRRLILRTHTTASSIRYLASLSDEEKNKPHKVFCIDRVFRNEAIDYKHLPEFYQCEGIIMDDNVNFNNLIGVLKEFLNRLGFEKVRFRPAYFPFTEPSLEAEVYLEGKGWLEILGAGIFRPEVLEPIGIEKPVLAWGIGFSRLAMLRYGLTDIRDLHKNDLDWLKRV</sequence>
<keyword id="KW-0030">Aminoacyl-tRNA synthetase</keyword>
<keyword id="KW-0067">ATP-binding</keyword>
<keyword id="KW-0963">Cytoplasm</keyword>
<keyword id="KW-0436">Ligase</keyword>
<keyword id="KW-0460">Magnesium</keyword>
<keyword id="KW-0479">Metal-binding</keyword>
<keyword id="KW-0547">Nucleotide-binding</keyword>
<keyword id="KW-0648">Protein biosynthesis</keyword>
<keyword id="KW-1185">Reference proteome</keyword>
<proteinExistence type="inferred from homology"/>